<reference key="1">
    <citation type="journal article" date="2001" name="Science">
        <title>The genome of the natural genetic engineer Agrobacterium tumefaciens C58.</title>
        <authorList>
            <person name="Wood D.W."/>
            <person name="Setubal J.C."/>
            <person name="Kaul R."/>
            <person name="Monks D.E."/>
            <person name="Kitajima J.P."/>
            <person name="Okura V.K."/>
            <person name="Zhou Y."/>
            <person name="Chen L."/>
            <person name="Wood G.E."/>
            <person name="Almeida N.F. Jr."/>
            <person name="Woo L."/>
            <person name="Chen Y."/>
            <person name="Paulsen I.T."/>
            <person name="Eisen J.A."/>
            <person name="Karp P.D."/>
            <person name="Bovee D. Sr."/>
            <person name="Chapman P."/>
            <person name="Clendenning J."/>
            <person name="Deatherage G."/>
            <person name="Gillet W."/>
            <person name="Grant C."/>
            <person name="Kutyavin T."/>
            <person name="Levy R."/>
            <person name="Li M.-J."/>
            <person name="McClelland E."/>
            <person name="Palmieri A."/>
            <person name="Raymond C."/>
            <person name="Rouse G."/>
            <person name="Saenphimmachak C."/>
            <person name="Wu Z."/>
            <person name="Romero P."/>
            <person name="Gordon D."/>
            <person name="Zhang S."/>
            <person name="Yoo H."/>
            <person name="Tao Y."/>
            <person name="Biddle P."/>
            <person name="Jung M."/>
            <person name="Krespan W."/>
            <person name="Perry M."/>
            <person name="Gordon-Kamm B."/>
            <person name="Liao L."/>
            <person name="Kim S."/>
            <person name="Hendrick C."/>
            <person name="Zhao Z.-Y."/>
            <person name="Dolan M."/>
            <person name="Chumley F."/>
            <person name="Tingey S.V."/>
            <person name="Tomb J.-F."/>
            <person name="Gordon M.P."/>
            <person name="Olson M.V."/>
            <person name="Nester E.W."/>
        </authorList>
    </citation>
    <scope>NUCLEOTIDE SEQUENCE [LARGE SCALE GENOMIC DNA]</scope>
    <source>
        <strain>C58 / ATCC 33970</strain>
    </source>
</reference>
<reference key="2">
    <citation type="journal article" date="2001" name="Science">
        <title>Genome sequence of the plant pathogen and biotechnology agent Agrobacterium tumefaciens C58.</title>
        <authorList>
            <person name="Goodner B."/>
            <person name="Hinkle G."/>
            <person name="Gattung S."/>
            <person name="Miller N."/>
            <person name="Blanchard M."/>
            <person name="Qurollo B."/>
            <person name="Goldman B.S."/>
            <person name="Cao Y."/>
            <person name="Askenazi M."/>
            <person name="Halling C."/>
            <person name="Mullin L."/>
            <person name="Houmiel K."/>
            <person name="Gordon J."/>
            <person name="Vaudin M."/>
            <person name="Iartchouk O."/>
            <person name="Epp A."/>
            <person name="Liu F."/>
            <person name="Wollam C."/>
            <person name="Allinger M."/>
            <person name="Doughty D."/>
            <person name="Scott C."/>
            <person name="Lappas C."/>
            <person name="Markelz B."/>
            <person name="Flanagan C."/>
            <person name="Crowell C."/>
            <person name="Gurson J."/>
            <person name="Lomo C."/>
            <person name="Sear C."/>
            <person name="Strub G."/>
            <person name="Cielo C."/>
            <person name="Slater S."/>
        </authorList>
    </citation>
    <scope>NUCLEOTIDE SEQUENCE [LARGE SCALE GENOMIC DNA]</scope>
    <source>
        <strain>C58 / ATCC 33970</strain>
    </source>
</reference>
<sequence>MSGDFPTAARAAEILERVRQMRPRVHCLMNTVVQKFTADGITVIGGIPSMTTSLEEIESFVTKADALTVNLGTLDAERRRVIRLAIEIANASGKPWIVDPVHVDYSPSRLDFARELIAQSPTIVRGNRAEMSLIGDVPDVVRIETGPVDHLRDRTRNVSIVNGHPWMAKVTGTGCLSGGVIAAFMAVEKDALTAAASALAVTGVSAELAAQRAKGPGTFEPAFLDALSEISGEDIINHARIEHEQG</sequence>
<keyword id="KW-0067">ATP-binding</keyword>
<keyword id="KW-0418">Kinase</keyword>
<keyword id="KW-0460">Magnesium</keyword>
<keyword id="KW-0479">Metal-binding</keyword>
<keyword id="KW-0547">Nucleotide-binding</keyword>
<keyword id="KW-1185">Reference proteome</keyword>
<keyword id="KW-0784">Thiamine biosynthesis</keyword>
<keyword id="KW-0808">Transferase</keyword>
<comment type="function">
    <text evidence="1">Catalyzes the phosphorylation of the hydroxyl group of 4-methyl-5-beta-hydroxyethylthiazole (THZ).</text>
</comment>
<comment type="catalytic activity">
    <reaction>
        <text>5-(2-hydroxyethyl)-4-methylthiazole + ATP = 4-methyl-5-(2-phosphooxyethyl)-thiazole + ADP + H(+)</text>
        <dbReference type="Rhea" id="RHEA:24212"/>
        <dbReference type="ChEBI" id="CHEBI:15378"/>
        <dbReference type="ChEBI" id="CHEBI:17957"/>
        <dbReference type="ChEBI" id="CHEBI:30616"/>
        <dbReference type="ChEBI" id="CHEBI:58296"/>
        <dbReference type="ChEBI" id="CHEBI:456216"/>
        <dbReference type="EC" id="2.7.1.50"/>
    </reaction>
</comment>
<comment type="cofactor">
    <cofactor evidence="1">
        <name>Mg(2+)</name>
        <dbReference type="ChEBI" id="CHEBI:18420"/>
    </cofactor>
</comment>
<comment type="pathway">
    <text>Cofactor biosynthesis; thiamine diphosphate biosynthesis; 4-methyl-5-(2-phosphoethyl)-thiazole from 5-(2-hydroxyethyl)-4-methylthiazole: step 1/1.</text>
</comment>
<comment type="similarity">
    <text evidence="2">Belongs to the Thz kinase family.</text>
</comment>
<comment type="caution">
    <text evidence="2">Has a deletion of about 30 residues in position 132 compared to all other ThiM.</text>
</comment>
<accession>Q8UAS9</accession>
<gene>
    <name type="primary">thiM</name>
    <name type="ordered locus">Atu3288</name>
    <name type="ORF">AGR_L_3060</name>
</gene>
<feature type="chain" id="PRO_0000156923" description="Probable hydroxyethylthiazole kinase">
    <location>
        <begin position="1"/>
        <end position="246"/>
    </location>
</feature>
<feature type="binding site" evidence="1">
    <location>
        <position position="50"/>
    </location>
    <ligand>
        <name>substrate</name>
    </ligand>
</feature>
<feature type="binding site" evidence="1">
    <location>
        <position position="125"/>
    </location>
    <ligand>
        <name>ATP</name>
        <dbReference type="ChEBI" id="CHEBI:30616"/>
    </ligand>
</feature>
<feature type="binding site" evidence="1">
    <location>
        <position position="145"/>
    </location>
    <ligand>
        <name>ATP</name>
        <dbReference type="ChEBI" id="CHEBI:30616"/>
    </ligand>
</feature>
<feature type="binding site" evidence="1">
    <location>
        <position position="172"/>
    </location>
    <ligand>
        <name>substrate</name>
    </ligand>
</feature>
<dbReference type="EC" id="2.7.1.50"/>
<dbReference type="EMBL" id="AE007870">
    <property type="protein sequence ID" value="AAK90102.1"/>
    <property type="molecule type" value="Genomic_DNA"/>
</dbReference>
<dbReference type="PIR" id="AB2961">
    <property type="entry name" value="AB2961"/>
</dbReference>
<dbReference type="PIR" id="D98322">
    <property type="entry name" value="D98322"/>
</dbReference>
<dbReference type="RefSeq" id="NP_357317.1">
    <property type="nucleotide sequence ID" value="NC_003063.2"/>
</dbReference>
<dbReference type="RefSeq" id="WP_010972914.1">
    <property type="nucleotide sequence ID" value="NC_003063.2"/>
</dbReference>
<dbReference type="SMR" id="Q8UAS9"/>
<dbReference type="STRING" id="176299.Atu3288"/>
<dbReference type="EnsemblBacteria" id="AAK90102">
    <property type="protein sequence ID" value="AAK90102"/>
    <property type="gene ID" value="Atu3288"/>
</dbReference>
<dbReference type="GeneID" id="1135162"/>
<dbReference type="KEGG" id="atu:Atu3288"/>
<dbReference type="PATRIC" id="fig|176299.10.peg.3129"/>
<dbReference type="eggNOG" id="COG2145">
    <property type="taxonomic scope" value="Bacteria"/>
</dbReference>
<dbReference type="HOGENOM" id="CLU_019943_0_1_5"/>
<dbReference type="OrthoDB" id="8909021at2"/>
<dbReference type="PhylomeDB" id="Q8UAS9"/>
<dbReference type="BioCyc" id="AGRO:ATU3288-MONOMER"/>
<dbReference type="UniPathway" id="UPA00060">
    <property type="reaction ID" value="UER00139"/>
</dbReference>
<dbReference type="Proteomes" id="UP000000813">
    <property type="component" value="Chromosome linear"/>
</dbReference>
<dbReference type="GO" id="GO:0005524">
    <property type="term" value="F:ATP binding"/>
    <property type="evidence" value="ECO:0007669"/>
    <property type="project" value="UniProtKB-KW"/>
</dbReference>
<dbReference type="GO" id="GO:0004417">
    <property type="term" value="F:hydroxyethylthiazole kinase activity"/>
    <property type="evidence" value="ECO:0007669"/>
    <property type="project" value="UniProtKB-EC"/>
</dbReference>
<dbReference type="GO" id="GO:0000287">
    <property type="term" value="F:magnesium ion binding"/>
    <property type="evidence" value="ECO:0007669"/>
    <property type="project" value="InterPro"/>
</dbReference>
<dbReference type="GO" id="GO:0009228">
    <property type="term" value="P:thiamine biosynthetic process"/>
    <property type="evidence" value="ECO:0007669"/>
    <property type="project" value="UniProtKB-KW"/>
</dbReference>
<dbReference type="GO" id="GO:0009229">
    <property type="term" value="P:thiamine diphosphate biosynthetic process"/>
    <property type="evidence" value="ECO:0007669"/>
    <property type="project" value="UniProtKB-UniPathway"/>
</dbReference>
<dbReference type="CDD" id="cd01170">
    <property type="entry name" value="THZ_kinase"/>
    <property type="match status" value="1"/>
</dbReference>
<dbReference type="Gene3D" id="3.40.1190.20">
    <property type="match status" value="2"/>
</dbReference>
<dbReference type="InterPro" id="IPR000417">
    <property type="entry name" value="Hyethyz_kinase"/>
</dbReference>
<dbReference type="InterPro" id="IPR029056">
    <property type="entry name" value="Ribokinase-like"/>
</dbReference>
<dbReference type="Pfam" id="PF02110">
    <property type="entry name" value="HK"/>
    <property type="match status" value="2"/>
</dbReference>
<dbReference type="PIRSF" id="PIRSF000513">
    <property type="entry name" value="Thz_kinase"/>
    <property type="match status" value="1"/>
</dbReference>
<dbReference type="PRINTS" id="PR01099">
    <property type="entry name" value="HYETHTZKNASE"/>
</dbReference>
<dbReference type="SUPFAM" id="SSF53613">
    <property type="entry name" value="Ribokinase-like"/>
    <property type="match status" value="1"/>
</dbReference>
<name>THIM_AGRFC</name>
<proteinExistence type="inferred from homology"/>
<protein>
    <recommendedName>
        <fullName>Probable hydroxyethylthiazole kinase</fullName>
        <ecNumber>2.7.1.50</ecNumber>
    </recommendedName>
    <alternativeName>
        <fullName>4-methyl-5-beta-hydroxyethylthiazole kinase</fullName>
        <shortName>TH kinase</shortName>
        <shortName>Thz kinase</shortName>
    </alternativeName>
</protein>
<organism>
    <name type="scientific">Agrobacterium fabrum (strain C58 / ATCC 33970)</name>
    <name type="common">Agrobacterium tumefaciens (strain C58)</name>
    <dbReference type="NCBI Taxonomy" id="176299"/>
    <lineage>
        <taxon>Bacteria</taxon>
        <taxon>Pseudomonadati</taxon>
        <taxon>Pseudomonadota</taxon>
        <taxon>Alphaproteobacteria</taxon>
        <taxon>Hyphomicrobiales</taxon>
        <taxon>Rhizobiaceae</taxon>
        <taxon>Rhizobium/Agrobacterium group</taxon>
        <taxon>Agrobacterium</taxon>
        <taxon>Agrobacterium tumefaciens complex</taxon>
    </lineage>
</organism>
<evidence type="ECO:0000250" key="1"/>
<evidence type="ECO:0000305" key="2"/>